<reference key="1">
    <citation type="journal article" date="2005" name="Infect. Immun.">
        <title>Whole-genome analyses of speciation events in pathogenic Brucellae.</title>
        <authorList>
            <person name="Chain P.S."/>
            <person name="Comerci D.J."/>
            <person name="Tolmasky M.E."/>
            <person name="Larimer F.W."/>
            <person name="Malfatti S.A."/>
            <person name="Vergez L.M."/>
            <person name="Aguero F."/>
            <person name="Land M.L."/>
            <person name="Ugalde R.A."/>
            <person name="Garcia E."/>
        </authorList>
    </citation>
    <scope>NUCLEOTIDE SEQUENCE [LARGE SCALE GENOMIC DNA]</scope>
    <source>
        <strain>2308</strain>
    </source>
</reference>
<organism>
    <name type="scientific">Brucella abortus (strain 2308)</name>
    <dbReference type="NCBI Taxonomy" id="359391"/>
    <lineage>
        <taxon>Bacteria</taxon>
        <taxon>Pseudomonadati</taxon>
        <taxon>Pseudomonadota</taxon>
        <taxon>Alphaproteobacteria</taxon>
        <taxon>Hyphomicrobiales</taxon>
        <taxon>Brucellaceae</taxon>
        <taxon>Brucella/Ochrobactrum group</taxon>
        <taxon>Brucella</taxon>
    </lineage>
</organism>
<dbReference type="EC" id="7.1.1.-" evidence="1"/>
<dbReference type="EMBL" id="AM040264">
    <property type="protein sequence ID" value="CAJ10788.1"/>
    <property type="molecule type" value="Genomic_DNA"/>
</dbReference>
<dbReference type="RefSeq" id="WP_002963947.1">
    <property type="nucleotide sequence ID" value="NZ_KN046823.1"/>
</dbReference>
<dbReference type="SMR" id="Q2YNF3"/>
<dbReference type="STRING" id="359391.BAB1_0832"/>
<dbReference type="GeneID" id="97533881"/>
<dbReference type="KEGG" id="bmf:BAB1_0832"/>
<dbReference type="PATRIC" id="fig|359391.11.peg.3142"/>
<dbReference type="HOGENOM" id="CLU_144724_2_0_5"/>
<dbReference type="PhylomeDB" id="Q2YNF3"/>
<dbReference type="Proteomes" id="UP000002719">
    <property type="component" value="Chromosome I"/>
</dbReference>
<dbReference type="GO" id="GO:0030964">
    <property type="term" value="C:NADH dehydrogenase complex"/>
    <property type="evidence" value="ECO:0007669"/>
    <property type="project" value="TreeGrafter"/>
</dbReference>
<dbReference type="GO" id="GO:0005886">
    <property type="term" value="C:plasma membrane"/>
    <property type="evidence" value="ECO:0007669"/>
    <property type="project" value="UniProtKB-SubCell"/>
</dbReference>
<dbReference type="GO" id="GO:0050136">
    <property type="term" value="F:NADH:ubiquinone reductase (non-electrogenic) activity"/>
    <property type="evidence" value="ECO:0007669"/>
    <property type="project" value="UniProtKB-UniRule"/>
</dbReference>
<dbReference type="GO" id="GO:0048038">
    <property type="term" value="F:quinone binding"/>
    <property type="evidence" value="ECO:0007669"/>
    <property type="project" value="UniProtKB-KW"/>
</dbReference>
<dbReference type="GO" id="GO:0042773">
    <property type="term" value="P:ATP synthesis coupled electron transport"/>
    <property type="evidence" value="ECO:0007669"/>
    <property type="project" value="InterPro"/>
</dbReference>
<dbReference type="FunFam" id="1.10.287.3510:FF:000001">
    <property type="entry name" value="NADH-quinone oxidoreductase subunit K"/>
    <property type="match status" value="1"/>
</dbReference>
<dbReference type="Gene3D" id="1.10.287.3510">
    <property type="match status" value="1"/>
</dbReference>
<dbReference type="HAMAP" id="MF_01456">
    <property type="entry name" value="NDH1_NuoK"/>
    <property type="match status" value="1"/>
</dbReference>
<dbReference type="InterPro" id="IPR001133">
    <property type="entry name" value="NADH_UbQ_OxRdtase_chain4L/K"/>
</dbReference>
<dbReference type="InterPro" id="IPR039428">
    <property type="entry name" value="NUOK/Mnh_C1-like"/>
</dbReference>
<dbReference type="NCBIfam" id="NF004320">
    <property type="entry name" value="PRK05715.1-2"/>
    <property type="match status" value="1"/>
</dbReference>
<dbReference type="NCBIfam" id="NF004321">
    <property type="entry name" value="PRK05715.1-3"/>
    <property type="match status" value="1"/>
</dbReference>
<dbReference type="NCBIfam" id="NF004323">
    <property type="entry name" value="PRK05715.1-5"/>
    <property type="match status" value="1"/>
</dbReference>
<dbReference type="PANTHER" id="PTHR11434:SF21">
    <property type="entry name" value="NADH DEHYDROGENASE SUBUNIT 4L-RELATED"/>
    <property type="match status" value="1"/>
</dbReference>
<dbReference type="PANTHER" id="PTHR11434">
    <property type="entry name" value="NADH-UBIQUINONE OXIDOREDUCTASE SUBUNIT ND4L"/>
    <property type="match status" value="1"/>
</dbReference>
<dbReference type="Pfam" id="PF00420">
    <property type="entry name" value="Oxidored_q2"/>
    <property type="match status" value="1"/>
</dbReference>
<name>NUOK_BRUA2</name>
<accession>Q2YNF3</accession>
<proteinExistence type="inferred from homology"/>
<sequence length="102" mass="10942">MEIGIAHYLTVSAILFTLGVFGIFLNRKNVIVILMSIELILLSVNLNFVAFSSQLGDLVGQVFALFVLTVAAAEAAIGLAILVVFFRNRGSIAVEDVNVMKG</sequence>
<keyword id="KW-0997">Cell inner membrane</keyword>
<keyword id="KW-1003">Cell membrane</keyword>
<keyword id="KW-0472">Membrane</keyword>
<keyword id="KW-0520">NAD</keyword>
<keyword id="KW-0874">Quinone</keyword>
<keyword id="KW-1185">Reference proteome</keyword>
<keyword id="KW-1278">Translocase</keyword>
<keyword id="KW-0812">Transmembrane</keyword>
<keyword id="KW-1133">Transmembrane helix</keyword>
<keyword id="KW-0813">Transport</keyword>
<keyword id="KW-0830">Ubiquinone</keyword>
<evidence type="ECO:0000255" key="1">
    <source>
        <dbReference type="HAMAP-Rule" id="MF_01456"/>
    </source>
</evidence>
<feature type="chain" id="PRO_0000389971" description="NADH-quinone oxidoreductase subunit K">
    <location>
        <begin position="1"/>
        <end position="102"/>
    </location>
</feature>
<feature type="transmembrane region" description="Helical" evidence="1">
    <location>
        <begin position="5"/>
        <end position="25"/>
    </location>
</feature>
<feature type="transmembrane region" description="Helical" evidence="1">
    <location>
        <begin position="31"/>
        <end position="51"/>
    </location>
</feature>
<feature type="transmembrane region" description="Helical" evidence="1">
    <location>
        <begin position="66"/>
        <end position="86"/>
    </location>
</feature>
<comment type="function">
    <text evidence="1">NDH-1 shuttles electrons from NADH, via FMN and iron-sulfur (Fe-S) centers, to quinones in the respiratory chain. The immediate electron acceptor for the enzyme in this species is believed to be ubiquinone. Couples the redox reaction to proton translocation (for every two electrons transferred, four hydrogen ions are translocated across the cytoplasmic membrane), and thus conserves the redox energy in a proton gradient.</text>
</comment>
<comment type="catalytic activity">
    <reaction evidence="1">
        <text>a quinone + NADH + 5 H(+)(in) = a quinol + NAD(+) + 4 H(+)(out)</text>
        <dbReference type="Rhea" id="RHEA:57888"/>
        <dbReference type="ChEBI" id="CHEBI:15378"/>
        <dbReference type="ChEBI" id="CHEBI:24646"/>
        <dbReference type="ChEBI" id="CHEBI:57540"/>
        <dbReference type="ChEBI" id="CHEBI:57945"/>
        <dbReference type="ChEBI" id="CHEBI:132124"/>
    </reaction>
</comment>
<comment type="subunit">
    <text evidence="1">NDH-1 is composed of 14 different subunits. Subunits NuoA, H, J, K, L, M, N constitute the membrane sector of the complex.</text>
</comment>
<comment type="subcellular location">
    <subcellularLocation>
        <location evidence="1">Cell inner membrane</location>
        <topology evidence="1">Multi-pass membrane protein</topology>
    </subcellularLocation>
</comment>
<comment type="similarity">
    <text evidence="1">Belongs to the complex I subunit 4L family.</text>
</comment>
<gene>
    <name evidence="1" type="primary">nuoK</name>
    <name type="ordered locus">BAB1_0832</name>
</gene>
<protein>
    <recommendedName>
        <fullName evidence="1">NADH-quinone oxidoreductase subunit K</fullName>
        <ecNumber evidence="1">7.1.1.-</ecNumber>
    </recommendedName>
    <alternativeName>
        <fullName evidence="1">NADH dehydrogenase I subunit K</fullName>
    </alternativeName>
    <alternativeName>
        <fullName evidence="1">NDH-1 subunit K</fullName>
    </alternativeName>
</protein>